<reference evidence="4" key="1">
    <citation type="journal article" date="2007" name="Nature">
        <title>Evolution of genes and genomes on the Drosophila phylogeny.</title>
        <authorList>
            <consortium name="Drosophila 12 genomes consortium"/>
        </authorList>
    </citation>
    <scope>NUCLEOTIDE SEQUENCE [LARGE SCALE GENOMIC DNA]</scope>
    <source>
        <strain evidence="4">Tucson 14021-0224.01</strain>
    </source>
</reference>
<keyword id="KW-0068">Autocatalytic cleavage</keyword>
<keyword id="KW-1015">Disulfide bond</keyword>
<keyword id="KW-0378">Hydrolase</keyword>
<keyword id="KW-0645">Protease</keyword>
<keyword id="KW-0732">Signal</keyword>
<name>ASPG1_DROER</name>
<organism>
    <name type="scientific">Drosophila erecta</name>
    <name type="common">Fruit fly</name>
    <dbReference type="NCBI Taxonomy" id="7220"/>
    <lineage>
        <taxon>Eukaryota</taxon>
        <taxon>Metazoa</taxon>
        <taxon>Ecdysozoa</taxon>
        <taxon>Arthropoda</taxon>
        <taxon>Hexapoda</taxon>
        <taxon>Insecta</taxon>
        <taxon>Pterygota</taxon>
        <taxon>Neoptera</taxon>
        <taxon>Endopterygota</taxon>
        <taxon>Diptera</taxon>
        <taxon>Brachycera</taxon>
        <taxon>Muscomorpha</taxon>
        <taxon>Ephydroidea</taxon>
        <taxon>Drosophilidae</taxon>
        <taxon>Drosophila</taxon>
        <taxon>Sophophora</taxon>
    </lineage>
</organism>
<comment type="function">
    <text evidence="2">Cleaves the GlcNAc-Asn bond which joins oligosaccharides to the peptide of asparagine-linked glycoproteins.</text>
</comment>
<comment type="catalytic activity">
    <reaction evidence="2">
        <text>N(4)-(beta-N-acetyl-D-glucosaminyl)-L-asparagine + H2O = N-acetyl-beta-D-glucosaminylamine + L-aspartate + H(+)</text>
        <dbReference type="Rhea" id="RHEA:11544"/>
        <dbReference type="ChEBI" id="CHEBI:15377"/>
        <dbReference type="ChEBI" id="CHEBI:15378"/>
        <dbReference type="ChEBI" id="CHEBI:15947"/>
        <dbReference type="ChEBI" id="CHEBI:29991"/>
        <dbReference type="ChEBI" id="CHEBI:58080"/>
        <dbReference type="EC" id="3.5.1.26"/>
    </reaction>
</comment>
<comment type="subunit">
    <text evidence="2">Heterotetramer of two alpha and two beta chains arranged as a dimer of alpha/beta heterodimers.</text>
</comment>
<comment type="PTM">
    <text evidence="1">Cleaved into an alpha and beta chain by autocatalysis; this activates the enzyme. The N-terminal residue of the beta subunit is responsible for the nucleophile hydrolase activity (By similarity).</text>
</comment>
<comment type="similarity">
    <text evidence="3">Belongs to the Ntn-hydrolase family.</text>
</comment>
<feature type="signal peptide" evidence="3">
    <location>
        <begin position="1"/>
        <end position="23"/>
    </location>
</feature>
<feature type="chain" id="PRO_0000384125" description="Glycosylasparaginase alpha chain" evidence="2">
    <location>
        <begin position="24"/>
        <end position="245"/>
    </location>
</feature>
<feature type="chain" id="PRO_0000384126" description="Glycosylasparaginase beta chain" evidence="2">
    <location>
        <begin position="246"/>
        <end position="396"/>
    </location>
</feature>
<feature type="active site" description="Nucleophile" evidence="2">
    <location>
        <position position="246"/>
    </location>
</feature>
<feature type="binding site" evidence="1">
    <location>
        <begin position="274"/>
        <end position="277"/>
    </location>
    <ligand>
        <name>substrate</name>
    </ligand>
</feature>
<feature type="binding site" evidence="1">
    <location>
        <begin position="297"/>
        <end position="300"/>
    </location>
    <ligand>
        <name>substrate</name>
    </ligand>
</feature>
<feature type="disulfide bond" evidence="2">
    <location>
        <begin position="100"/>
        <end position="105"/>
    </location>
</feature>
<feature type="disulfide bond" evidence="2">
    <location>
        <begin position="199"/>
        <end position="215"/>
    </location>
</feature>
<feature type="disulfide bond" evidence="2">
    <location>
        <begin position="357"/>
        <end position="384"/>
    </location>
</feature>
<protein>
    <recommendedName>
        <fullName evidence="2">Putative N(4)-(beta-N-acetylglucosaminyl)-L-asparaginase GG24090</fullName>
        <ecNumber>3.5.1.26</ecNumber>
    </recommendedName>
    <alternativeName>
        <fullName evidence="2">Aspartylglucosaminidase</fullName>
        <shortName evidence="2">AGA</shortName>
    </alternativeName>
    <alternativeName>
        <fullName evidence="2">Glycosylasparaginase</fullName>
    </alternativeName>
    <alternativeName>
        <fullName evidence="2">N4-(N-acetyl-beta-glucosaminyl)-L-asparagine amidase</fullName>
    </alternativeName>
    <component>
        <recommendedName>
            <fullName evidence="2">Glycosylasparaginase alpha chain</fullName>
        </recommendedName>
    </component>
    <component>
        <recommendedName>
            <fullName evidence="2">Glycosylasparaginase beta chain</fullName>
        </recommendedName>
    </component>
</protein>
<dbReference type="EC" id="3.5.1.26"/>
<dbReference type="EMBL" id="CH954177">
    <property type="protein sequence ID" value="EDV58236.1"/>
    <property type="molecule type" value="Genomic_DNA"/>
</dbReference>
<dbReference type="SMR" id="B3N6Y7"/>
<dbReference type="EnsemblMetazoa" id="FBtr0144144">
    <property type="protein sequence ID" value="FBpp0142636"/>
    <property type="gene ID" value="FBgn0116229"/>
</dbReference>
<dbReference type="EnsemblMetazoa" id="XM_001969141.3">
    <property type="protein sequence ID" value="XP_001969177.1"/>
    <property type="gene ID" value="LOC6541640"/>
</dbReference>
<dbReference type="GeneID" id="6541640"/>
<dbReference type="KEGG" id="der:6541640"/>
<dbReference type="eggNOG" id="KOG1593">
    <property type="taxonomic scope" value="Eukaryota"/>
</dbReference>
<dbReference type="HOGENOM" id="CLU_021603_0_0_1"/>
<dbReference type="OMA" id="YKPIINI"/>
<dbReference type="OrthoDB" id="188713at2759"/>
<dbReference type="PhylomeDB" id="B3N6Y7"/>
<dbReference type="Proteomes" id="UP000008711">
    <property type="component" value="Unassembled WGS sequence"/>
</dbReference>
<dbReference type="GO" id="GO:0005764">
    <property type="term" value="C:lysosome"/>
    <property type="evidence" value="ECO:0000250"/>
    <property type="project" value="UniProtKB"/>
</dbReference>
<dbReference type="GO" id="GO:0003948">
    <property type="term" value="F:N4-(beta-N-acetylglucosaminyl)-L-asparaginase activity"/>
    <property type="evidence" value="ECO:0000250"/>
    <property type="project" value="UniProtKB"/>
</dbReference>
<dbReference type="GO" id="GO:0008233">
    <property type="term" value="F:peptidase activity"/>
    <property type="evidence" value="ECO:0007669"/>
    <property type="project" value="UniProtKB-KW"/>
</dbReference>
<dbReference type="GO" id="GO:0006517">
    <property type="term" value="P:protein deglycosylation"/>
    <property type="evidence" value="ECO:0000250"/>
    <property type="project" value="UniProtKB"/>
</dbReference>
<dbReference type="GO" id="GO:0006508">
    <property type="term" value="P:proteolysis"/>
    <property type="evidence" value="ECO:0007669"/>
    <property type="project" value="UniProtKB-KW"/>
</dbReference>
<dbReference type="CDD" id="cd04513">
    <property type="entry name" value="Glycosylasparaginase"/>
    <property type="match status" value="1"/>
</dbReference>
<dbReference type="FunFam" id="3.60.20.30:FF:000003">
    <property type="entry name" value="N(4)-(Beta-N-acetylglucosaminyl)-L-asparaginase isoform X1"/>
    <property type="match status" value="1"/>
</dbReference>
<dbReference type="Gene3D" id="3.60.20.30">
    <property type="entry name" value="(Glycosyl)asparaginase"/>
    <property type="match status" value="1"/>
</dbReference>
<dbReference type="InterPro" id="IPR029055">
    <property type="entry name" value="Ntn_hydrolases_N"/>
</dbReference>
<dbReference type="InterPro" id="IPR000246">
    <property type="entry name" value="Peptidase_T2"/>
</dbReference>
<dbReference type="PANTHER" id="PTHR10188">
    <property type="entry name" value="L-ASPARAGINASE"/>
    <property type="match status" value="1"/>
</dbReference>
<dbReference type="PANTHER" id="PTHR10188:SF6">
    <property type="entry name" value="N(4)-(BETA-N-ACETYLGLUCOSAMINYL)-L-ASPARAGINASE"/>
    <property type="match status" value="1"/>
</dbReference>
<dbReference type="Pfam" id="PF01112">
    <property type="entry name" value="Asparaginase_2"/>
    <property type="match status" value="1"/>
</dbReference>
<dbReference type="SUPFAM" id="SSF56235">
    <property type="entry name" value="N-terminal nucleophile aminohydrolases (Ntn hydrolases)"/>
    <property type="match status" value="1"/>
</dbReference>
<gene>
    <name type="ORF">GG24090</name>
</gene>
<evidence type="ECO:0000250" key="1"/>
<evidence type="ECO:0000250" key="2">
    <source>
        <dbReference type="UniProtKB" id="P20933"/>
    </source>
</evidence>
<evidence type="ECO:0000255" key="3"/>
<evidence type="ECO:0000312" key="4">
    <source>
        <dbReference type="EMBL" id="EDV58236.1"/>
    </source>
</evidence>
<accession>B3N6Y7</accession>
<sequence>MKRHLGTCLWVLCLASTAFSSLAVTTSPKPTLASAFSGKSKTTAGTTAVKANKTTVELLPMVINTWKFTAANVLAWRILKQSKGGLRQTRNAVVEGCSKCEKLQCDRTVGYGGSPDELGETTLDAMVMDGATMDVGAVAGLRRIKDAIKVARHVLEHTQHTMLVGDAASAFANAMGFESESLITPESKDMWLQWTAENCQPNFWKNVHPDPKVSCGPYKPRPTPLTRWKEDRARNEYEIGRKNHDTIGMIAIDVESNIHAGTSTNGARHKIPGRVGDSPIPGAGAYADNEVGAAVATGDGDVMMRFLPSLLAVEAMRAGKPPAEAAQEGLRRILKYHKDFMGALIAVDRLGNYAAACYGLDEFPFMVSSPAGTDGPTRLETVKCIAGQDKVNVVSL</sequence>
<proteinExistence type="inferred from homology"/>